<keyword id="KW-0963">Cytoplasm</keyword>
<keyword id="KW-0275">Fatty acid biosynthesis</keyword>
<keyword id="KW-0276">Fatty acid metabolism</keyword>
<keyword id="KW-0444">Lipid biosynthesis</keyword>
<keyword id="KW-0443">Lipid metabolism</keyword>
<keyword id="KW-0596">Phosphopantetheine</keyword>
<keyword id="KW-0597">Phosphoprotein</keyword>
<keyword id="KW-1185">Reference proteome</keyword>
<proteinExistence type="inferred from homology"/>
<gene>
    <name evidence="2" type="primary">acpP</name>
    <name type="ordered locus">STM1196</name>
</gene>
<organism>
    <name type="scientific">Salmonella typhimurium (strain LT2 / SGSC1412 / ATCC 700720)</name>
    <dbReference type="NCBI Taxonomy" id="99287"/>
    <lineage>
        <taxon>Bacteria</taxon>
        <taxon>Pseudomonadati</taxon>
        <taxon>Pseudomonadota</taxon>
        <taxon>Gammaproteobacteria</taxon>
        <taxon>Enterobacterales</taxon>
        <taxon>Enterobacteriaceae</taxon>
        <taxon>Salmonella</taxon>
    </lineage>
</organism>
<feature type="initiator methionine" description="Removed" evidence="1">
    <location>
        <position position="1"/>
    </location>
</feature>
<feature type="chain" id="PRO_0000180183" description="Acyl carrier protein">
    <location>
        <begin position="2"/>
        <end position="78"/>
    </location>
</feature>
<feature type="domain" description="Carrier" evidence="3">
    <location>
        <begin position="2"/>
        <end position="77"/>
    </location>
</feature>
<feature type="modified residue" description="O-(pantetheine 4'-phosphoryl)serine" evidence="3">
    <location>
        <position position="37"/>
    </location>
</feature>
<evidence type="ECO:0000250" key="1"/>
<evidence type="ECO:0000255" key="2">
    <source>
        <dbReference type="HAMAP-Rule" id="MF_01217"/>
    </source>
</evidence>
<evidence type="ECO:0000255" key="3">
    <source>
        <dbReference type="PROSITE-ProRule" id="PRU00258"/>
    </source>
</evidence>
<accession>P0A6B1</accession>
<accession>P02901</accession>
<accession>Q53352</accession>
<comment type="function">
    <text evidence="2">Carrier of the growing fatty acid chain in fatty acid biosynthesis.</text>
</comment>
<comment type="pathway">
    <text evidence="2">Lipid metabolism; fatty acid biosynthesis.</text>
</comment>
<comment type="subcellular location">
    <subcellularLocation>
        <location evidence="2">Cytoplasm</location>
    </subcellularLocation>
</comment>
<comment type="PTM">
    <text evidence="2">4'-phosphopantetheine is transferred from CoA to a specific serine of apo-ACP by AcpS. This modification is essential for activity because fatty acids are bound in thioester linkage to the sulfhydryl of the prosthetic group.</text>
</comment>
<comment type="similarity">
    <text evidence="2">Belongs to the acyl carrier protein (ACP) family.</text>
</comment>
<sequence>MSTIEERVKKIIGEQLGVKQEEVTNNASFVEDLGADSLDTVELVMALEEEFDTEIPDEEAEKITTVQAAIDYINGHQA</sequence>
<protein>
    <recommendedName>
        <fullName evidence="2">Acyl carrier protein</fullName>
        <shortName evidence="2">ACP</shortName>
    </recommendedName>
    <alternativeName>
        <fullName>Cytosolic-activating factor</fullName>
        <shortName>CAF</shortName>
    </alternativeName>
    <alternativeName>
        <fullName>Fatty acid synthase acyl carrier protein</fullName>
    </alternativeName>
</protein>
<dbReference type="EMBL" id="AE006468">
    <property type="protein sequence ID" value="AAL20125.1"/>
    <property type="molecule type" value="Genomic_DNA"/>
</dbReference>
<dbReference type="RefSeq" id="NP_460166.1">
    <property type="nucleotide sequence ID" value="NC_003197.2"/>
</dbReference>
<dbReference type="RefSeq" id="WP_000103754.1">
    <property type="nucleotide sequence ID" value="NC_003197.2"/>
</dbReference>
<dbReference type="SMR" id="P0A6B1"/>
<dbReference type="STRING" id="99287.STM1196"/>
<dbReference type="DrugBank" id="DB03366">
    <property type="generic name" value="Imidazole"/>
</dbReference>
<dbReference type="PaxDb" id="99287-STM1196"/>
<dbReference type="GeneID" id="1252714"/>
<dbReference type="GeneID" id="98387866"/>
<dbReference type="KEGG" id="stm:STM1196"/>
<dbReference type="PATRIC" id="fig|99287.12.peg.1265"/>
<dbReference type="HOGENOM" id="CLU_108696_5_1_6"/>
<dbReference type="OMA" id="TMEASFI"/>
<dbReference type="PhylomeDB" id="P0A6B1"/>
<dbReference type="BioCyc" id="SENT99287:STM1196-MONOMER"/>
<dbReference type="UniPathway" id="UPA00094"/>
<dbReference type="PRO" id="PR:P0A6B1"/>
<dbReference type="Proteomes" id="UP000001014">
    <property type="component" value="Chromosome"/>
</dbReference>
<dbReference type="GO" id="GO:0005829">
    <property type="term" value="C:cytosol"/>
    <property type="evidence" value="ECO:0000318"/>
    <property type="project" value="GO_Central"/>
</dbReference>
<dbReference type="GO" id="GO:0016020">
    <property type="term" value="C:membrane"/>
    <property type="evidence" value="ECO:0007669"/>
    <property type="project" value="GOC"/>
</dbReference>
<dbReference type="GO" id="GO:0000035">
    <property type="term" value="F:acyl binding"/>
    <property type="evidence" value="ECO:0000318"/>
    <property type="project" value="GO_Central"/>
</dbReference>
<dbReference type="GO" id="GO:0000036">
    <property type="term" value="F:acyl carrier activity"/>
    <property type="evidence" value="ECO:0000318"/>
    <property type="project" value="GO_Central"/>
</dbReference>
<dbReference type="GO" id="GO:0009245">
    <property type="term" value="P:lipid A biosynthetic process"/>
    <property type="evidence" value="ECO:0000318"/>
    <property type="project" value="GO_Central"/>
</dbReference>
<dbReference type="FunFam" id="1.10.1200.10:FF:000001">
    <property type="entry name" value="Acyl carrier protein"/>
    <property type="match status" value="1"/>
</dbReference>
<dbReference type="Gene3D" id="1.10.1200.10">
    <property type="entry name" value="ACP-like"/>
    <property type="match status" value="1"/>
</dbReference>
<dbReference type="HAMAP" id="MF_01217">
    <property type="entry name" value="Acyl_carrier"/>
    <property type="match status" value="1"/>
</dbReference>
<dbReference type="InterPro" id="IPR003231">
    <property type="entry name" value="ACP"/>
</dbReference>
<dbReference type="InterPro" id="IPR036736">
    <property type="entry name" value="ACP-like_sf"/>
</dbReference>
<dbReference type="InterPro" id="IPR009081">
    <property type="entry name" value="PP-bd_ACP"/>
</dbReference>
<dbReference type="InterPro" id="IPR006162">
    <property type="entry name" value="Ppantetheine_attach_site"/>
</dbReference>
<dbReference type="NCBIfam" id="TIGR00517">
    <property type="entry name" value="acyl_carrier"/>
    <property type="match status" value="1"/>
</dbReference>
<dbReference type="NCBIfam" id="NF002148">
    <property type="entry name" value="PRK00982.1-2"/>
    <property type="match status" value="1"/>
</dbReference>
<dbReference type="NCBIfam" id="NF002149">
    <property type="entry name" value="PRK00982.1-3"/>
    <property type="match status" value="1"/>
</dbReference>
<dbReference type="NCBIfam" id="NF002150">
    <property type="entry name" value="PRK00982.1-4"/>
    <property type="match status" value="1"/>
</dbReference>
<dbReference type="NCBIfam" id="NF002151">
    <property type="entry name" value="PRK00982.1-5"/>
    <property type="match status" value="1"/>
</dbReference>
<dbReference type="PANTHER" id="PTHR20863">
    <property type="entry name" value="ACYL CARRIER PROTEIN"/>
    <property type="match status" value="1"/>
</dbReference>
<dbReference type="PANTHER" id="PTHR20863:SF76">
    <property type="entry name" value="CARRIER DOMAIN-CONTAINING PROTEIN"/>
    <property type="match status" value="1"/>
</dbReference>
<dbReference type="Pfam" id="PF00550">
    <property type="entry name" value="PP-binding"/>
    <property type="match status" value="1"/>
</dbReference>
<dbReference type="SUPFAM" id="SSF47336">
    <property type="entry name" value="ACP-like"/>
    <property type="match status" value="1"/>
</dbReference>
<dbReference type="PROSITE" id="PS50075">
    <property type="entry name" value="CARRIER"/>
    <property type="match status" value="1"/>
</dbReference>
<dbReference type="PROSITE" id="PS00012">
    <property type="entry name" value="PHOSPHOPANTETHEINE"/>
    <property type="match status" value="1"/>
</dbReference>
<reference key="1">
    <citation type="journal article" date="2001" name="Nature">
        <title>Complete genome sequence of Salmonella enterica serovar Typhimurium LT2.</title>
        <authorList>
            <person name="McClelland M."/>
            <person name="Sanderson K.E."/>
            <person name="Spieth J."/>
            <person name="Clifton S.W."/>
            <person name="Latreille P."/>
            <person name="Courtney L."/>
            <person name="Porwollik S."/>
            <person name="Ali J."/>
            <person name="Dante M."/>
            <person name="Du F."/>
            <person name="Hou S."/>
            <person name="Layman D."/>
            <person name="Leonard S."/>
            <person name="Nguyen C."/>
            <person name="Scott K."/>
            <person name="Holmes A."/>
            <person name="Grewal N."/>
            <person name="Mulvaney E."/>
            <person name="Ryan E."/>
            <person name="Sun H."/>
            <person name="Florea L."/>
            <person name="Miller W."/>
            <person name="Stoneking T."/>
            <person name="Nhan M."/>
            <person name="Waterston R."/>
            <person name="Wilson R.K."/>
        </authorList>
    </citation>
    <scope>NUCLEOTIDE SEQUENCE [LARGE SCALE GENOMIC DNA]</scope>
    <source>
        <strain>LT2 / SGSC1412 / ATCC 700720</strain>
    </source>
</reference>
<name>ACP_SALTY</name>